<name>AROA_MARMS</name>
<sequence>MNSITLGPLSKANGEIQIPGSKSLSNRILLLATLAKGTTKITNLLDSDDIRRMLESLTKLGVSYSLEDNGTTCVLEGLGGPIQADFGDLFLGNAGTAMRPLTAALCLGKGEFLLHGEPRMHERPIGDLVDALQALGVDITYEGEKNYPPLRIKANGLSGGEVSIKGNISSQFLTAILMSAPLAKSDLTIKVDGELVSKPYIDITLHAMKQFGVEVENQNYQAFVVKGQQTYQSPGEIMVEGDASSASYFLAAAAIAGGKIKVHGVGTDSVQGDVKFADVLAQMGAKITYGPSWIEAERNELNGIDMDMNHIPDAAMTIATTALFAKGPTTIRNIYNWRVKETDRLYAMATELKKLGADVIEGKDFITVTPVANLKHAAIDTYNDHRIAMCFSLVAFSDTPVTINDPGCTSKTFPTYFELFNTIAN</sequence>
<accession>A6VXX9</accession>
<proteinExistence type="inferred from homology"/>
<keyword id="KW-0028">Amino-acid biosynthesis</keyword>
<keyword id="KW-0057">Aromatic amino acid biosynthesis</keyword>
<keyword id="KW-0963">Cytoplasm</keyword>
<keyword id="KW-0808">Transferase</keyword>
<comment type="function">
    <text evidence="1">Catalyzes the transfer of the enolpyruvyl moiety of phosphoenolpyruvate (PEP) to the 5-hydroxyl of shikimate-3-phosphate (S3P) to produce enolpyruvyl shikimate-3-phosphate and inorganic phosphate.</text>
</comment>
<comment type="catalytic activity">
    <reaction evidence="1">
        <text>3-phosphoshikimate + phosphoenolpyruvate = 5-O-(1-carboxyvinyl)-3-phosphoshikimate + phosphate</text>
        <dbReference type="Rhea" id="RHEA:21256"/>
        <dbReference type="ChEBI" id="CHEBI:43474"/>
        <dbReference type="ChEBI" id="CHEBI:57701"/>
        <dbReference type="ChEBI" id="CHEBI:58702"/>
        <dbReference type="ChEBI" id="CHEBI:145989"/>
        <dbReference type="EC" id="2.5.1.19"/>
    </reaction>
    <physiologicalReaction direction="left-to-right" evidence="1">
        <dbReference type="Rhea" id="RHEA:21257"/>
    </physiologicalReaction>
</comment>
<comment type="pathway">
    <text evidence="1">Metabolic intermediate biosynthesis; chorismate biosynthesis; chorismate from D-erythrose 4-phosphate and phosphoenolpyruvate: step 6/7.</text>
</comment>
<comment type="subunit">
    <text evidence="1">Monomer.</text>
</comment>
<comment type="subcellular location">
    <subcellularLocation>
        <location evidence="1">Cytoplasm</location>
    </subcellularLocation>
</comment>
<comment type="similarity">
    <text evidence="1">Belongs to the EPSP synthase family.</text>
</comment>
<gene>
    <name evidence="1" type="primary">aroA</name>
    <name type="ordered locus">Mmwyl1_2386</name>
</gene>
<feature type="chain" id="PRO_1000077991" description="3-phosphoshikimate 1-carboxyvinyltransferase">
    <location>
        <begin position="1"/>
        <end position="425"/>
    </location>
</feature>
<feature type="active site" description="Proton acceptor" evidence="1">
    <location>
        <position position="313"/>
    </location>
</feature>
<feature type="binding site" evidence="1">
    <location>
        <position position="22"/>
    </location>
    <ligand>
        <name>3-phosphoshikimate</name>
        <dbReference type="ChEBI" id="CHEBI:145989"/>
    </ligand>
</feature>
<feature type="binding site" evidence="1">
    <location>
        <position position="22"/>
    </location>
    <ligand>
        <name>phosphoenolpyruvate</name>
        <dbReference type="ChEBI" id="CHEBI:58702"/>
    </ligand>
</feature>
<feature type="binding site" evidence="1">
    <location>
        <position position="23"/>
    </location>
    <ligand>
        <name>3-phosphoshikimate</name>
        <dbReference type="ChEBI" id="CHEBI:145989"/>
    </ligand>
</feature>
<feature type="binding site" evidence="1">
    <location>
        <position position="27"/>
    </location>
    <ligand>
        <name>3-phosphoshikimate</name>
        <dbReference type="ChEBI" id="CHEBI:145989"/>
    </ligand>
</feature>
<feature type="binding site" evidence="1">
    <location>
        <position position="95"/>
    </location>
    <ligand>
        <name>phosphoenolpyruvate</name>
        <dbReference type="ChEBI" id="CHEBI:58702"/>
    </ligand>
</feature>
<feature type="binding site" evidence="1">
    <location>
        <position position="123"/>
    </location>
    <ligand>
        <name>phosphoenolpyruvate</name>
        <dbReference type="ChEBI" id="CHEBI:58702"/>
    </ligand>
</feature>
<feature type="binding site" evidence="1">
    <location>
        <position position="169"/>
    </location>
    <ligand>
        <name>3-phosphoshikimate</name>
        <dbReference type="ChEBI" id="CHEBI:145989"/>
    </ligand>
</feature>
<feature type="binding site" evidence="1">
    <location>
        <position position="170"/>
    </location>
    <ligand>
        <name>3-phosphoshikimate</name>
        <dbReference type="ChEBI" id="CHEBI:145989"/>
    </ligand>
</feature>
<feature type="binding site" evidence="1">
    <location>
        <position position="171"/>
    </location>
    <ligand>
        <name>3-phosphoshikimate</name>
        <dbReference type="ChEBI" id="CHEBI:145989"/>
    </ligand>
</feature>
<feature type="binding site" evidence="1">
    <location>
        <position position="171"/>
    </location>
    <ligand>
        <name>phosphoenolpyruvate</name>
        <dbReference type="ChEBI" id="CHEBI:58702"/>
    </ligand>
</feature>
<feature type="binding site" evidence="1">
    <location>
        <position position="197"/>
    </location>
    <ligand>
        <name>3-phosphoshikimate</name>
        <dbReference type="ChEBI" id="CHEBI:145989"/>
    </ligand>
</feature>
<feature type="binding site" evidence="1">
    <location>
        <position position="313"/>
    </location>
    <ligand>
        <name>3-phosphoshikimate</name>
        <dbReference type="ChEBI" id="CHEBI:145989"/>
    </ligand>
</feature>
<feature type="binding site" evidence="1">
    <location>
        <position position="336"/>
    </location>
    <ligand>
        <name>3-phosphoshikimate</name>
        <dbReference type="ChEBI" id="CHEBI:145989"/>
    </ligand>
</feature>
<feature type="binding site" evidence="1">
    <location>
        <position position="340"/>
    </location>
    <ligand>
        <name>3-phosphoshikimate</name>
        <dbReference type="ChEBI" id="CHEBI:145989"/>
    </ligand>
</feature>
<feature type="binding site" evidence="1">
    <location>
        <position position="344"/>
    </location>
    <ligand>
        <name>phosphoenolpyruvate</name>
        <dbReference type="ChEBI" id="CHEBI:58702"/>
    </ligand>
</feature>
<feature type="binding site" evidence="1">
    <location>
        <position position="386"/>
    </location>
    <ligand>
        <name>phosphoenolpyruvate</name>
        <dbReference type="ChEBI" id="CHEBI:58702"/>
    </ligand>
</feature>
<feature type="binding site" evidence="1">
    <location>
        <position position="411"/>
    </location>
    <ligand>
        <name>phosphoenolpyruvate</name>
        <dbReference type="ChEBI" id="CHEBI:58702"/>
    </ligand>
</feature>
<dbReference type="EC" id="2.5.1.19" evidence="1"/>
<dbReference type="EMBL" id="CP000749">
    <property type="protein sequence ID" value="ABR71308.1"/>
    <property type="molecule type" value="Genomic_DNA"/>
</dbReference>
<dbReference type="SMR" id="A6VXX9"/>
<dbReference type="STRING" id="400668.Mmwyl1_2386"/>
<dbReference type="KEGG" id="mmw:Mmwyl1_2386"/>
<dbReference type="eggNOG" id="COG0128">
    <property type="taxonomic scope" value="Bacteria"/>
</dbReference>
<dbReference type="HOGENOM" id="CLU_024321_0_0_6"/>
<dbReference type="OrthoDB" id="9809920at2"/>
<dbReference type="UniPathway" id="UPA00053">
    <property type="reaction ID" value="UER00089"/>
</dbReference>
<dbReference type="GO" id="GO:0005737">
    <property type="term" value="C:cytoplasm"/>
    <property type="evidence" value="ECO:0007669"/>
    <property type="project" value="UniProtKB-SubCell"/>
</dbReference>
<dbReference type="GO" id="GO:0003866">
    <property type="term" value="F:3-phosphoshikimate 1-carboxyvinyltransferase activity"/>
    <property type="evidence" value="ECO:0007669"/>
    <property type="project" value="UniProtKB-UniRule"/>
</dbReference>
<dbReference type="GO" id="GO:0008652">
    <property type="term" value="P:amino acid biosynthetic process"/>
    <property type="evidence" value="ECO:0007669"/>
    <property type="project" value="UniProtKB-KW"/>
</dbReference>
<dbReference type="GO" id="GO:0009073">
    <property type="term" value="P:aromatic amino acid family biosynthetic process"/>
    <property type="evidence" value="ECO:0007669"/>
    <property type="project" value="UniProtKB-KW"/>
</dbReference>
<dbReference type="GO" id="GO:0009423">
    <property type="term" value="P:chorismate biosynthetic process"/>
    <property type="evidence" value="ECO:0007669"/>
    <property type="project" value="UniProtKB-UniRule"/>
</dbReference>
<dbReference type="CDD" id="cd01556">
    <property type="entry name" value="EPSP_synthase"/>
    <property type="match status" value="1"/>
</dbReference>
<dbReference type="FunFam" id="3.65.10.10:FF:000003">
    <property type="entry name" value="3-phosphoshikimate 1-carboxyvinyltransferase"/>
    <property type="match status" value="1"/>
</dbReference>
<dbReference type="FunFam" id="3.65.10.10:FF:000004">
    <property type="entry name" value="3-phosphoshikimate 1-carboxyvinyltransferase"/>
    <property type="match status" value="1"/>
</dbReference>
<dbReference type="Gene3D" id="3.65.10.10">
    <property type="entry name" value="Enolpyruvate transferase domain"/>
    <property type="match status" value="2"/>
</dbReference>
<dbReference type="HAMAP" id="MF_00210">
    <property type="entry name" value="EPSP_synth"/>
    <property type="match status" value="1"/>
</dbReference>
<dbReference type="InterPro" id="IPR001986">
    <property type="entry name" value="Enolpyruvate_Tfrase_dom"/>
</dbReference>
<dbReference type="InterPro" id="IPR036968">
    <property type="entry name" value="Enolpyruvate_Tfrase_sf"/>
</dbReference>
<dbReference type="InterPro" id="IPR006264">
    <property type="entry name" value="EPSP_synthase"/>
</dbReference>
<dbReference type="InterPro" id="IPR023193">
    <property type="entry name" value="EPSP_synthase_CS"/>
</dbReference>
<dbReference type="InterPro" id="IPR013792">
    <property type="entry name" value="RNA3'P_cycl/enolpyr_Trfase_a/b"/>
</dbReference>
<dbReference type="NCBIfam" id="TIGR01356">
    <property type="entry name" value="aroA"/>
    <property type="match status" value="1"/>
</dbReference>
<dbReference type="PANTHER" id="PTHR21090">
    <property type="entry name" value="AROM/DEHYDROQUINATE SYNTHASE"/>
    <property type="match status" value="1"/>
</dbReference>
<dbReference type="PANTHER" id="PTHR21090:SF5">
    <property type="entry name" value="PENTAFUNCTIONAL AROM POLYPEPTIDE"/>
    <property type="match status" value="1"/>
</dbReference>
<dbReference type="Pfam" id="PF00275">
    <property type="entry name" value="EPSP_synthase"/>
    <property type="match status" value="1"/>
</dbReference>
<dbReference type="PIRSF" id="PIRSF000505">
    <property type="entry name" value="EPSPS"/>
    <property type="match status" value="1"/>
</dbReference>
<dbReference type="SUPFAM" id="SSF55205">
    <property type="entry name" value="EPT/RTPC-like"/>
    <property type="match status" value="1"/>
</dbReference>
<dbReference type="PROSITE" id="PS00104">
    <property type="entry name" value="EPSP_SYNTHASE_1"/>
    <property type="match status" value="1"/>
</dbReference>
<dbReference type="PROSITE" id="PS00885">
    <property type="entry name" value="EPSP_SYNTHASE_2"/>
    <property type="match status" value="1"/>
</dbReference>
<protein>
    <recommendedName>
        <fullName evidence="1">3-phosphoshikimate 1-carboxyvinyltransferase</fullName>
        <ecNumber evidence="1">2.5.1.19</ecNumber>
    </recommendedName>
    <alternativeName>
        <fullName evidence="1">5-enolpyruvylshikimate-3-phosphate synthase</fullName>
        <shortName evidence="1">EPSP synthase</shortName>
        <shortName evidence="1">EPSPS</shortName>
    </alternativeName>
</protein>
<reference key="1">
    <citation type="submission" date="2007-06" db="EMBL/GenBank/DDBJ databases">
        <title>Complete sequence of Marinomonas sp. MWYL1.</title>
        <authorList>
            <consortium name="US DOE Joint Genome Institute"/>
            <person name="Copeland A."/>
            <person name="Lucas S."/>
            <person name="Lapidus A."/>
            <person name="Barry K."/>
            <person name="Glavina del Rio T."/>
            <person name="Dalin E."/>
            <person name="Tice H."/>
            <person name="Pitluck S."/>
            <person name="Kiss H."/>
            <person name="Brettin T."/>
            <person name="Bruce D."/>
            <person name="Detter J.C."/>
            <person name="Han C."/>
            <person name="Schmutz J."/>
            <person name="Larimer F."/>
            <person name="Land M."/>
            <person name="Hauser L."/>
            <person name="Kyrpides N."/>
            <person name="Kim E."/>
            <person name="Johnston A.W.B."/>
            <person name="Todd J.D."/>
            <person name="Rogers R."/>
            <person name="Wexler M."/>
            <person name="Bond P.L."/>
            <person name="Li Y."/>
            <person name="Richardson P."/>
        </authorList>
    </citation>
    <scope>NUCLEOTIDE SEQUENCE [LARGE SCALE GENOMIC DNA]</scope>
    <source>
        <strain>MWYL1</strain>
    </source>
</reference>
<organism>
    <name type="scientific">Marinomonas sp. (strain MWYL1)</name>
    <dbReference type="NCBI Taxonomy" id="400668"/>
    <lineage>
        <taxon>Bacteria</taxon>
        <taxon>Pseudomonadati</taxon>
        <taxon>Pseudomonadota</taxon>
        <taxon>Gammaproteobacteria</taxon>
        <taxon>Oceanospirillales</taxon>
        <taxon>Oceanospirillaceae</taxon>
        <taxon>Marinomonas</taxon>
    </lineage>
</organism>
<evidence type="ECO:0000255" key="1">
    <source>
        <dbReference type="HAMAP-Rule" id="MF_00210"/>
    </source>
</evidence>